<sequence>MFNFANFYQLIAQDTRLQPWLNVLPQQLTDWQNAEHGDFPRWLKALNKIPEGAPDQIDIKHSVTISNDTPFHQGELKKLESLLRTFHPWRKGPYTVHGIHIDTEWRSDWKWDRVLPHISPLKNRSVLDVGCGNGYHMWRMLGEGARLCVGIDPSHLFLIQFEAIRKLMGGDQRAHLLPLGIEQLPKLEAFDTVFSMGVLYHRRSPLDHLIQLKDQLVSGGELILETLVIEGDETAVLVPKERYAQMRNVYFFPSARALKVWLELVGFEDVRIVDENVTSVDEQRTTNWMTHNSLPDYLDQNDPSKTVEGYPAPRRAILVAKKP</sequence>
<keyword id="KW-0808">Transferase</keyword>
<keyword id="KW-0819">tRNA processing</keyword>
<gene>
    <name evidence="1" type="primary">cmoB</name>
    <name type="ordered locus">VV2291</name>
</gene>
<comment type="function">
    <text evidence="1">Catalyzes carboxymethyl transfer from carboxy-S-adenosyl-L-methionine (Cx-SAM) to 5-hydroxyuridine (ho5U) to form 5-carboxymethoxyuridine (cmo5U) at position 34 in tRNAs.</text>
</comment>
<comment type="catalytic activity">
    <reaction evidence="1">
        <text>carboxy-S-adenosyl-L-methionine + 5-hydroxyuridine(34) in tRNA = 5-carboxymethoxyuridine(34) in tRNA + S-adenosyl-L-homocysteine + H(+)</text>
        <dbReference type="Rhea" id="RHEA:52848"/>
        <dbReference type="Rhea" id="RHEA-COMP:13381"/>
        <dbReference type="Rhea" id="RHEA-COMP:13383"/>
        <dbReference type="ChEBI" id="CHEBI:15378"/>
        <dbReference type="ChEBI" id="CHEBI:57856"/>
        <dbReference type="ChEBI" id="CHEBI:134278"/>
        <dbReference type="ChEBI" id="CHEBI:136877"/>
        <dbReference type="ChEBI" id="CHEBI:136879"/>
    </reaction>
</comment>
<comment type="subunit">
    <text evidence="1">Homotetramer.</text>
</comment>
<comment type="similarity">
    <text evidence="1">Belongs to the class I-like SAM-binding methyltransferase superfamily. CmoB family.</text>
</comment>
<accession>Q7MJ71</accession>
<dbReference type="EC" id="2.5.1.-" evidence="1"/>
<dbReference type="EMBL" id="BA000037">
    <property type="protein sequence ID" value="BAC95055.1"/>
    <property type="molecule type" value="Genomic_DNA"/>
</dbReference>
<dbReference type="RefSeq" id="WP_011080032.1">
    <property type="nucleotide sequence ID" value="NC_005139.1"/>
</dbReference>
<dbReference type="SMR" id="Q7MJ71"/>
<dbReference type="STRING" id="672.VV93_v1c20010"/>
<dbReference type="GeneID" id="93896344"/>
<dbReference type="KEGG" id="vvy:VV2291"/>
<dbReference type="eggNOG" id="COG0500">
    <property type="taxonomic scope" value="Bacteria"/>
</dbReference>
<dbReference type="HOGENOM" id="CLU_052665_0_0_6"/>
<dbReference type="Proteomes" id="UP000002675">
    <property type="component" value="Chromosome I"/>
</dbReference>
<dbReference type="GO" id="GO:0008168">
    <property type="term" value="F:methyltransferase activity"/>
    <property type="evidence" value="ECO:0007669"/>
    <property type="project" value="TreeGrafter"/>
</dbReference>
<dbReference type="GO" id="GO:0016765">
    <property type="term" value="F:transferase activity, transferring alkyl or aryl (other than methyl) groups"/>
    <property type="evidence" value="ECO:0007669"/>
    <property type="project" value="UniProtKB-UniRule"/>
</dbReference>
<dbReference type="GO" id="GO:0002098">
    <property type="term" value="P:tRNA wobble uridine modification"/>
    <property type="evidence" value="ECO:0007669"/>
    <property type="project" value="InterPro"/>
</dbReference>
<dbReference type="CDD" id="cd02440">
    <property type="entry name" value="AdoMet_MTases"/>
    <property type="match status" value="1"/>
</dbReference>
<dbReference type="Gene3D" id="3.40.50.150">
    <property type="entry name" value="Vaccinia Virus protein VP39"/>
    <property type="match status" value="1"/>
</dbReference>
<dbReference type="HAMAP" id="MF_01590">
    <property type="entry name" value="tRNA_carboxymethyltr_CmoB"/>
    <property type="match status" value="1"/>
</dbReference>
<dbReference type="InterPro" id="IPR010017">
    <property type="entry name" value="CmoB"/>
</dbReference>
<dbReference type="InterPro" id="IPR027555">
    <property type="entry name" value="Mo5U34_MeTrfas-like"/>
</dbReference>
<dbReference type="InterPro" id="IPR029063">
    <property type="entry name" value="SAM-dependent_MTases_sf"/>
</dbReference>
<dbReference type="NCBIfam" id="NF011650">
    <property type="entry name" value="PRK15068.1"/>
    <property type="match status" value="1"/>
</dbReference>
<dbReference type="NCBIfam" id="TIGR00452">
    <property type="entry name" value="tRNA 5-methoxyuridine(34)/uridine 5-oxyacetic acid(34) synthase CmoB"/>
    <property type="match status" value="1"/>
</dbReference>
<dbReference type="PANTHER" id="PTHR43464">
    <property type="entry name" value="METHYLTRANSFERASE"/>
    <property type="match status" value="1"/>
</dbReference>
<dbReference type="PANTHER" id="PTHR43464:SF95">
    <property type="entry name" value="TRNA U34 CARBOXYMETHYLTRANSFERASE"/>
    <property type="match status" value="1"/>
</dbReference>
<dbReference type="Pfam" id="PF08003">
    <property type="entry name" value="Methyltransf_9"/>
    <property type="match status" value="1"/>
</dbReference>
<dbReference type="SUPFAM" id="SSF53335">
    <property type="entry name" value="S-adenosyl-L-methionine-dependent methyltransferases"/>
    <property type="match status" value="1"/>
</dbReference>
<name>CMOB_VIBVY</name>
<reference key="1">
    <citation type="journal article" date="2003" name="Genome Res.">
        <title>Comparative genome analysis of Vibrio vulnificus, a marine pathogen.</title>
        <authorList>
            <person name="Chen C.-Y."/>
            <person name="Wu K.-M."/>
            <person name="Chang Y.-C."/>
            <person name="Chang C.-H."/>
            <person name="Tsai H.-C."/>
            <person name="Liao T.-L."/>
            <person name="Liu Y.-M."/>
            <person name="Chen H.-J."/>
            <person name="Shen A.B.-T."/>
            <person name="Li J.-C."/>
            <person name="Su T.-L."/>
            <person name="Shao C.-P."/>
            <person name="Lee C.-T."/>
            <person name="Hor L.-I."/>
            <person name="Tsai S.-F."/>
        </authorList>
    </citation>
    <scope>NUCLEOTIDE SEQUENCE [LARGE SCALE GENOMIC DNA]</scope>
    <source>
        <strain>YJ016</strain>
    </source>
</reference>
<feature type="chain" id="PRO_0000313990" description="tRNA U34 carboxymethyltransferase">
    <location>
        <begin position="1"/>
        <end position="323"/>
    </location>
</feature>
<feature type="binding site" evidence="1">
    <location>
        <position position="91"/>
    </location>
    <ligand>
        <name>carboxy-S-adenosyl-L-methionine</name>
        <dbReference type="ChEBI" id="CHEBI:134278"/>
    </ligand>
</feature>
<feature type="binding site" evidence="1">
    <location>
        <position position="105"/>
    </location>
    <ligand>
        <name>carboxy-S-adenosyl-L-methionine</name>
        <dbReference type="ChEBI" id="CHEBI:134278"/>
    </ligand>
</feature>
<feature type="binding site" evidence="1">
    <location>
        <position position="110"/>
    </location>
    <ligand>
        <name>carboxy-S-adenosyl-L-methionine</name>
        <dbReference type="ChEBI" id="CHEBI:134278"/>
    </ligand>
</feature>
<feature type="binding site" evidence="1">
    <location>
        <position position="130"/>
    </location>
    <ligand>
        <name>carboxy-S-adenosyl-L-methionine</name>
        <dbReference type="ChEBI" id="CHEBI:134278"/>
    </ligand>
</feature>
<feature type="binding site" evidence="1">
    <location>
        <begin position="152"/>
        <end position="154"/>
    </location>
    <ligand>
        <name>carboxy-S-adenosyl-L-methionine</name>
        <dbReference type="ChEBI" id="CHEBI:134278"/>
    </ligand>
</feature>
<feature type="binding site" evidence="1">
    <location>
        <begin position="181"/>
        <end position="182"/>
    </location>
    <ligand>
        <name>carboxy-S-adenosyl-L-methionine</name>
        <dbReference type="ChEBI" id="CHEBI:134278"/>
    </ligand>
</feature>
<feature type="binding site" evidence="1">
    <location>
        <position position="196"/>
    </location>
    <ligand>
        <name>carboxy-S-adenosyl-L-methionine</name>
        <dbReference type="ChEBI" id="CHEBI:134278"/>
    </ligand>
</feature>
<feature type="binding site" evidence="1">
    <location>
        <position position="200"/>
    </location>
    <ligand>
        <name>carboxy-S-adenosyl-L-methionine</name>
        <dbReference type="ChEBI" id="CHEBI:134278"/>
    </ligand>
</feature>
<feature type="binding site" evidence="1">
    <location>
        <position position="315"/>
    </location>
    <ligand>
        <name>carboxy-S-adenosyl-L-methionine</name>
        <dbReference type="ChEBI" id="CHEBI:134278"/>
    </ligand>
</feature>
<evidence type="ECO:0000255" key="1">
    <source>
        <dbReference type="HAMAP-Rule" id="MF_01590"/>
    </source>
</evidence>
<proteinExistence type="inferred from homology"/>
<protein>
    <recommendedName>
        <fullName evidence="1">tRNA U34 carboxymethyltransferase</fullName>
        <ecNumber evidence="1">2.5.1.-</ecNumber>
    </recommendedName>
</protein>
<organism>
    <name type="scientific">Vibrio vulnificus (strain YJ016)</name>
    <dbReference type="NCBI Taxonomy" id="196600"/>
    <lineage>
        <taxon>Bacteria</taxon>
        <taxon>Pseudomonadati</taxon>
        <taxon>Pseudomonadota</taxon>
        <taxon>Gammaproteobacteria</taxon>
        <taxon>Vibrionales</taxon>
        <taxon>Vibrionaceae</taxon>
        <taxon>Vibrio</taxon>
    </lineage>
</organism>